<comment type="function">
    <text evidence="7">The pyruvate dehydrogenase complex catalyzes the overall conversion of pyruvate to acetyl-CoA and CO(2) (PubMed:34927582). High pyruvate dehydrogenase complex activity is required for sufficient energy production during germination of conidia (PubMed:34927582).</text>
</comment>
<comment type="catalytic activity">
    <reaction evidence="5">
        <text>N(6)-[(R)-dihydrolipoyl]-L-lysyl-[protein] + acetyl-CoA = N(6)-[(R)-S(8)-acetyldihydrolipoyl]-L-lysyl-[protein] + CoA</text>
        <dbReference type="Rhea" id="RHEA:17017"/>
        <dbReference type="Rhea" id="RHEA-COMP:10475"/>
        <dbReference type="Rhea" id="RHEA-COMP:10478"/>
        <dbReference type="ChEBI" id="CHEBI:57287"/>
        <dbReference type="ChEBI" id="CHEBI:57288"/>
        <dbReference type="ChEBI" id="CHEBI:83100"/>
        <dbReference type="ChEBI" id="CHEBI:83111"/>
        <dbReference type="EC" id="2.3.1.12"/>
    </reaction>
</comment>
<comment type="cofactor">
    <cofactor evidence="3">
        <name>(R)-lipoate</name>
        <dbReference type="ChEBI" id="CHEBI:83088"/>
    </cofactor>
    <text evidence="3">Binds 1 lipoyl cofactor covalently.</text>
</comment>
<comment type="subunit">
    <text evidence="1 7">Eukaryotic pyruvate dehydrogenase (PDH) complexes are organized as a core consisting of the oligomeric dihydrolipoamide acetyl-transferase (E2), around which are arranged multiple copies of pyruvate dehydrogenase (E1), dihydrolipoamide dehydrogenase (E3) and protein X (E3BP) bound by non-covalent bonds (By similarity). Interacts with SIR5; the interaction is direct (PubMed:34927582).</text>
</comment>
<comment type="subcellular location">
    <subcellularLocation>
        <location evidence="7">Mitochondrion matrix</location>
    </subcellularLocation>
</comment>
<comment type="PTM">
    <text evidence="7">Decrotonylated at 'Lys-148' by SIR5, which inhibits the activity of the pyruvate dehydrogenase complex (PDC).</text>
</comment>
<comment type="miscellaneous">
    <text evidence="9">The E2 component contains covalently-bound lipoyl cofactors and it participates in the generation of acetyl groups from hydroxyethyl-thiamine pyrophosphate-E1 and their transfer to coenzyme A.</text>
</comment>
<comment type="similarity">
    <text evidence="9">Belongs to the 2-oxoacid dehydrogenase family.</text>
</comment>
<sequence>MLSAALRRRVLAPTHSALRTGFAAHVVRHYASFPEHQVIKMPALSPTMQAGNIGAWQKKPGDSIAPGDVLVEIETDKAQMDFEFQEEGVIAKILKDAGEKDIPVGSPIAVLVEEGTDISAFEKFSIEDAGGDAAKPAAPKKEEKSESKSESASAPEPTPEPQQYQSQGRLQTALDRLPNISASAKRLAREKGISIDGLKGTGKNGQITEEDVKKAISSPAASSAPSATYEDIPISGMRKTIANRLVESTQTNPHFYVTSSISVSKLLKLRQALNSSADGKYKLSVNDFLIKAIAVASRKVPQVNSSWRDGNIRQFNNVDVSVAVSTPTGLITPIVTGVEGRGLEAISSQVKSLAKKARDGKLKPEEYQGGTISISNMGMNPAVDHFTAVINPPQAAILAVGTTKKVAIPAENEAGVEFDDQITLTASFDHKVVDGAVGAEWLKELKQVLENPLELLL</sequence>
<accession>A0A0D2Y5A7</accession>
<proteinExistence type="evidence at protein level"/>
<reference evidence="10" key="1">
    <citation type="journal article" date="2010" name="Nature">
        <title>Comparative genomics reveals mobile pathogenicity chromosomes in Fusarium.</title>
        <authorList>
            <person name="Ma L.-J."/>
            <person name="van der Does H.C."/>
            <person name="Borkovich K.A."/>
            <person name="Coleman J.J."/>
            <person name="Daboussi M.-J."/>
            <person name="Di Pietro A."/>
            <person name="Dufresne M."/>
            <person name="Freitag M."/>
            <person name="Grabherr M."/>
            <person name="Henrissat B."/>
            <person name="Houterman P.M."/>
            <person name="Kang S."/>
            <person name="Shim W.-B."/>
            <person name="Woloshuk C."/>
            <person name="Xie X."/>
            <person name="Xu J.-R."/>
            <person name="Antoniw J."/>
            <person name="Baker S.E."/>
            <person name="Bluhm B.H."/>
            <person name="Breakspear A."/>
            <person name="Brown D.W."/>
            <person name="Butchko R.A.E."/>
            <person name="Chapman S."/>
            <person name="Coulson R."/>
            <person name="Coutinho P.M."/>
            <person name="Danchin E.G.J."/>
            <person name="Diener A."/>
            <person name="Gale L.R."/>
            <person name="Gardiner D.M."/>
            <person name="Goff S."/>
            <person name="Hammond-Kosack K.E."/>
            <person name="Hilburn K."/>
            <person name="Hua-Van A."/>
            <person name="Jonkers W."/>
            <person name="Kazan K."/>
            <person name="Kodira C.D."/>
            <person name="Koehrsen M."/>
            <person name="Kumar L."/>
            <person name="Lee Y.-H."/>
            <person name="Li L."/>
            <person name="Manners J.M."/>
            <person name="Miranda-Saavedra D."/>
            <person name="Mukherjee M."/>
            <person name="Park G."/>
            <person name="Park J."/>
            <person name="Park S.-Y."/>
            <person name="Proctor R.H."/>
            <person name="Regev A."/>
            <person name="Ruiz-Roldan M.C."/>
            <person name="Sain D."/>
            <person name="Sakthikumar S."/>
            <person name="Sykes S."/>
            <person name="Schwartz D.C."/>
            <person name="Turgeon B.G."/>
            <person name="Wapinski I."/>
            <person name="Yoder O."/>
            <person name="Young S."/>
            <person name="Zeng Q."/>
            <person name="Zhou S."/>
            <person name="Galagan J."/>
            <person name="Cuomo C.A."/>
            <person name="Kistler H.C."/>
            <person name="Rep M."/>
        </authorList>
    </citation>
    <scope>NUCLEOTIDE SEQUENCE [LARGE SCALE GENOMIC DNA]</scope>
    <source>
        <strain evidence="10">4287 / CBS 123668 / FGSC 9935 / NRRL 34936</strain>
    </source>
</reference>
<reference evidence="9" key="2">
    <citation type="journal article" date="2021" name="Elife">
        <title>The decrotonylase FoSir5 facilitates mitochondrial metabolic state switching in conidial germination of Fusarium oxysporum.</title>
        <authorList>
            <person name="Zhang N."/>
            <person name="Song L."/>
            <person name="Xu Y."/>
            <person name="Pei X."/>
            <person name="Luisi B.F."/>
            <person name="Liang W."/>
        </authorList>
    </citation>
    <scope>FUNCTION</scope>
    <scope>INTERACTION WITH SIR5</scope>
    <scope>IDENTIFICATION BY MASS SPECTROMETRY</scope>
    <scope>SUBCELLULAR LOCATION</scope>
    <scope>CROTONYLATION AT LYS-148</scope>
    <scope>MUTAGENESIS OF LYS-148</scope>
</reference>
<dbReference type="EC" id="2.3.1.12" evidence="5"/>
<dbReference type="EMBL" id="DS231710">
    <property type="protein sequence ID" value="KNB11629.1"/>
    <property type="molecule type" value="Genomic_DNA"/>
</dbReference>
<dbReference type="EMBL" id="DS231710">
    <property type="protein sequence ID" value="KNB11630.1"/>
    <property type="molecule type" value="Genomic_DNA"/>
</dbReference>
<dbReference type="RefSeq" id="XP_018249674.1">
    <property type="nucleotide sequence ID" value="XM_018391088.1"/>
</dbReference>
<dbReference type="RefSeq" id="XP_018249675.1">
    <property type="nucleotide sequence ID" value="XM_018391089.1"/>
</dbReference>
<dbReference type="SMR" id="A0A0D2Y5A7"/>
<dbReference type="STRING" id="426428.A0A0D2Y5A7"/>
<dbReference type="EnsemblFungi" id="FOXG_11462T0">
    <property type="protein sequence ID" value="FOXG_11462P0"/>
    <property type="gene ID" value="FOXG_11462"/>
</dbReference>
<dbReference type="GeneID" id="28952865"/>
<dbReference type="KEGG" id="fox:FOXG_11462"/>
<dbReference type="VEuPathDB" id="FungiDB:FOXG_11462"/>
<dbReference type="OMA" id="TMEFESF"/>
<dbReference type="OrthoDB" id="104929at110618"/>
<dbReference type="Proteomes" id="UP000009097">
    <property type="component" value="Unassembled WGS sequence"/>
</dbReference>
<dbReference type="GO" id="GO:0005759">
    <property type="term" value="C:mitochondrial matrix"/>
    <property type="evidence" value="ECO:0007669"/>
    <property type="project" value="UniProtKB-SubCell"/>
</dbReference>
<dbReference type="GO" id="GO:0005739">
    <property type="term" value="C:mitochondrion"/>
    <property type="evidence" value="ECO:0000314"/>
    <property type="project" value="UniProtKB"/>
</dbReference>
<dbReference type="GO" id="GO:0045254">
    <property type="term" value="C:pyruvate dehydrogenase complex"/>
    <property type="evidence" value="ECO:0007669"/>
    <property type="project" value="EnsemblFungi"/>
</dbReference>
<dbReference type="GO" id="GO:0004742">
    <property type="term" value="F:dihydrolipoyllysine-residue acetyltransferase activity"/>
    <property type="evidence" value="ECO:0007669"/>
    <property type="project" value="UniProtKB-EC"/>
</dbReference>
<dbReference type="GO" id="GO:0009060">
    <property type="term" value="P:aerobic respiration"/>
    <property type="evidence" value="ECO:0000315"/>
    <property type="project" value="UniProtKB"/>
</dbReference>
<dbReference type="GO" id="GO:0006086">
    <property type="term" value="P:pyruvate decarboxylation to acetyl-CoA"/>
    <property type="evidence" value="ECO:0000315"/>
    <property type="project" value="UniProtKB"/>
</dbReference>
<dbReference type="CDD" id="cd06849">
    <property type="entry name" value="lipoyl_domain"/>
    <property type="match status" value="1"/>
</dbReference>
<dbReference type="FunFam" id="2.40.50.100:FF:000010">
    <property type="entry name" value="Acetyltransferase component of pyruvate dehydrogenase complex"/>
    <property type="match status" value="1"/>
</dbReference>
<dbReference type="FunFam" id="3.30.559.10:FF:000003">
    <property type="entry name" value="Acetyltransferase component of pyruvate dehydrogenase complex"/>
    <property type="match status" value="1"/>
</dbReference>
<dbReference type="Gene3D" id="2.40.50.100">
    <property type="match status" value="1"/>
</dbReference>
<dbReference type="Gene3D" id="3.30.559.10">
    <property type="entry name" value="Chloramphenicol acetyltransferase-like domain"/>
    <property type="match status" value="1"/>
</dbReference>
<dbReference type="Gene3D" id="4.10.320.10">
    <property type="entry name" value="E3-binding domain"/>
    <property type="match status" value="1"/>
</dbReference>
<dbReference type="InterPro" id="IPR003016">
    <property type="entry name" value="2-oxoA_DH_lipoyl-BS"/>
</dbReference>
<dbReference type="InterPro" id="IPR001078">
    <property type="entry name" value="2-oxoacid_DH_actylTfrase"/>
</dbReference>
<dbReference type="InterPro" id="IPR000089">
    <property type="entry name" value="Biotin_lipoyl"/>
</dbReference>
<dbReference type="InterPro" id="IPR023213">
    <property type="entry name" value="CAT-like_dom_sf"/>
</dbReference>
<dbReference type="InterPro" id="IPR045257">
    <property type="entry name" value="E2/Pdx1"/>
</dbReference>
<dbReference type="InterPro" id="IPR036625">
    <property type="entry name" value="E3-bd_dom_sf"/>
</dbReference>
<dbReference type="InterPro" id="IPR006257">
    <property type="entry name" value="LAT1"/>
</dbReference>
<dbReference type="InterPro" id="IPR004167">
    <property type="entry name" value="PSBD"/>
</dbReference>
<dbReference type="InterPro" id="IPR011053">
    <property type="entry name" value="Single_hybrid_motif"/>
</dbReference>
<dbReference type="NCBIfam" id="TIGR01349">
    <property type="entry name" value="PDHac_trf_mito"/>
    <property type="match status" value="1"/>
</dbReference>
<dbReference type="PANTHER" id="PTHR23151">
    <property type="entry name" value="DIHYDROLIPOAMIDE ACETYL/SUCCINYL-TRANSFERASE-RELATED"/>
    <property type="match status" value="1"/>
</dbReference>
<dbReference type="PANTHER" id="PTHR23151:SF90">
    <property type="entry name" value="DIHYDROLIPOYLLYSINE-RESIDUE ACETYLTRANSFERASE COMPONENT OF PYRUVATE DEHYDROGENASE COMPLEX, MITOCHONDRIAL-RELATED"/>
    <property type="match status" value="1"/>
</dbReference>
<dbReference type="Pfam" id="PF00198">
    <property type="entry name" value="2-oxoacid_dh"/>
    <property type="match status" value="1"/>
</dbReference>
<dbReference type="Pfam" id="PF00364">
    <property type="entry name" value="Biotin_lipoyl"/>
    <property type="match status" value="1"/>
</dbReference>
<dbReference type="Pfam" id="PF02817">
    <property type="entry name" value="E3_binding"/>
    <property type="match status" value="1"/>
</dbReference>
<dbReference type="SUPFAM" id="SSF52777">
    <property type="entry name" value="CoA-dependent acyltransferases"/>
    <property type="match status" value="1"/>
</dbReference>
<dbReference type="SUPFAM" id="SSF47005">
    <property type="entry name" value="Peripheral subunit-binding domain of 2-oxo acid dehydrogenase complex"/>
    <property type="match status" value="1"/>
</dbReference>
<dbReference type="SUPFAM" id="SSF51230">
    <property type="entry name" value="Single hybrid motif"/>
    <property type="match status" value="1"/>
</dbReference>
<dbReference type="PROSITE" id="PS50968">
    <property type="entry name" value="BIOTINYL_LIPOYL"/>
    <property type="match status" value="1"/>
</dbReference>
<dbReference type="PROSITE" id="PS00189">
    <property type="entry name" value="LIPOYL"/>
    <property type="match status" value="1"/>
</dbReference>
<dbReference type="PROSITE" id="PS51826">
    <property type="entry name" value="PSBD"/>
    <property type="match status" value="1"/>
</dbReference>
<name>ODP2_FUSO4</name>
<protein>
    <recommendedName>
        <fullName evidence="1">Dihydrolipoyllysine-residue acetyltransferase component of pyruvate dehydrogenase complex, mitochondrial</fullName>
        <ecNumber evidence="5">2.3.1.12</ecNumber>
    </recommendedName>
    <alternativeName>
        <fullName evidence="8">FoDLAT</fullName>
        <shortName evidence="8">DLAT</shortName>
    </alternativeName>
</protein>
<keyword id="KW-0012">Acyltransferase</keyword>
<keyword id="KW-0450">Lipoyl</keyword>
<keyword id="KW-0496">Mitochondrion</keyword>
<keyword id="KW-0670">Pyruvate</keyword>
<keyword id="KW-1185">Reference proteome</keyword>
<keyword id="KW-0808">Transferase</keyword>
<keyword id="KW-0809">Transit peptide</keyword>
<gene>
    <name evidence="1" type="primary">LAT1</name>
    <name evidence="10" type="ORF">FOXG_11462</name>
</gene>
<feature type="transit peptide" description="Mitochondrion" evidence="2">
    <location>
        <begin position="1"/>
        <end position="30"/>
    </location>
</feature>
<feature type="chain" id="PRO_0000457718" description="Dihydrolipoyllysine-residue acetyltransferase component of pyruvate dehydrogenase complex, mitochondrial" evidence="2">
    <location>
        <begin position="31"/>
        <end position="457"/>
    </location>
</feature>
<feature type="domain" description="Lipoyl-binding" evidence="3">
    <location>
        <begin position="36"/>
        <end position="112"/>
    </location>
</feature>
<feature type="domain" description="Peripheral subunit-binding (PSBD)" evidence="4">
    <location>
        <begin position="179"/>
        <end position="216"/>
    </location>
</feature>
<feature type="region of interest" description="Disordered" evidence="6">
    <location>
        <begin position="129"/>
        <end position="168"/>
    </location>
</feature>
<feature type="compositionally biased region" description="Basic and acidic residues" evidence="6">
    <location>
        <begin position="139"/>
        <end position="149"/>
    </location>
</feature>
<feature type="active site" evidence="2">
    <location>
        <position position="430"/>
    </location>
</feature>
<feature type="active site" evidence="2">
    <location>
        <position position="434"/>
    </location>
</feature>
<feature type="modified residue" description="N6-lipoyllysine" evidence="3">
    <location>
        <position position="77"/>
    </location>
</feature>
<feature type="modified residue" description="N6-crotonyllysine" evidence="7">
    <location>
        <position position="148"/>
    </location>
</feature>
<feature type="mutagenesis site" description="Abolishes crotonylation. Increases pyruvate dehydrogenase complex activity, cellular ATP content, and conidial germination." evidence="7">
    <original>K</original>
    <variation>Q</variation>
    <location>
        <position position="148"/>
    </location>
</feature>
<feature type="mutagenesis site" description="Abolishes crotonylation. Decreases pyruvate dehydrogenase complex activity, cellular ATP content, and conidial germination." evidence="7">
    <original>K</original>
    <variation>R</variation>
    <location>
        <position position="148"/>
    </location>
</feature>
<organism evidence="11">
    <name type="scientific">Fusarium oxysporum f. sp. lycopersici (strain 4287 / CBS 123668 / FGSC 9935 / NRRL 34936)</name>
    <name type="common">Fusarium vascular wilt of tomato</name>
    <dbReference type="NCBI Taxonomy" id="426428"/>
    <lineage>
        <taxon>Eukaryota</taxon>
        <taxon>Fungi</taxon>
        <taxon>Dikarya</taxon>
        <taxon>Ascomycota</taxon>
        <taxon>Pezizomycotina</taxon>
        <taxon>Sordariomycetes</taxon>
        <taxon>Hypocreomycetidae</taxon>
        <taxon>Hypocreales</taxon>
        <taxon>Nectriaceae</taxon>
        <taxon>Fusarium</taxon>
        <taxon>Fusarium oxysporum species complex</taxon>
    </lineage>
</organism>
<evidence type="ECO:0000250" key="1">
    <source>
        <dbReference type="UniProtKB" id="P12695"/>
    </source>
</evidence>
<evidence type="ECO:0000255" key="2"/>
<evidence type="ECO:0000255" key="3">
    <source>
        <dbReference type="PROSITE-ProRule" id="PRU01066"/>
    </source>
</evidence>
<evidence type="ECO:0000255" key="4">
    <source>
        <dbReference type="PROSITE-ProRule" id="PRU01170"/>
    </source>
</evidence>
<evidence type="ECO:0000255" key="5">
    <source>
        <dbReference type="RuleBase" id="RU361137"/>
    </source>
</evidence>
<evidence type="ECO:0000256" key="6">
    <source>
        <dbReference type="SAM" id="MobiDB-lite"/>
    </source>
</evidence>
<evidence type="ECO:0000269" key="7">
    <source>
    </source>
</evidence>
<evidence type="ECO:0000303" key="8">
    <source>
    </source>
</evidence>
<evidence type="ECO:0000305" key="9"/>
<evidence type="ECO:0000312" key="10">
    <source>
        <dbReference type="EMBL" id="KNB11629.1"/>
    </source>
</evidence>
<evidence type="ECO:0000312" key="11">
    <source>
        <dbReference type="EnsemblFungi" id="FOXG_11462P0"/>
    </source>
</evidence>